<dbReference type="EC" id="3.4.21.-"/>
<dbReference type="EMBL" id="AP009351">
    <property type="protein sequence ID" value="BAF67973.1"/>
    <property type="molecule type" value="Genomic_DNA"/>
</dbReference>
<dbReference type="RefSeq" id="WP_001038688.1">
    <property type="nucleotide sequence ID" value="NZ_JBBIAE010000013.1"/>
</dbReference>
<dbReference type="SMR" id="A6QHZ1"/>
<dbReference type="MEROPS" id="S01.526"/>
<dbReference type="KEGG" id="sae:NWMN_1701"/>
<dbReference type="HOGENOM" id="CLU_073589_2_0_9"/>
<dbReference type="Proteomes" id="UP000006386">
    <property type="component" value="Chromosome"/>
</dbReference>
<dbReference type="GO" id="GO:0005576">
    <property type="term" value="C:extracellular region"/>
    <property type="evidence" value="ECO:0007669"/>
    <property type="project" value="UniProtKB-SubCell"/>
</dbReference>
<dbReference type="GO" id="GO:0008236">
    <property type="term" value="F:serine-type peptidase activity"/>
    <property type="evidence" value="ECO:0007669"/>
    <property type="project" value="UniProtKB-KW"/>
</dbReference>
<dbReference type="GO" id="GO:0006508">
    <property type="term" value="P:proteolysis"/>
    <property type="evidence" value="ECO:0007669"/>
    <property type="project" value="UniProtKB-KW"/>
</dbReference>
<dbReference type="Gene3D" id="2.40.10.10">
    <property type="entry name" value="Trypsin-like serine proteases"/>
    <property type="match status" value="2"/>
</dbReference>
<dbReference type="InterPro" id="IPR009003">
    <property type="entry name" value="Peptidase_S1_PA"/>
</dbReference>
<dbReference type="InterPro" id="IPR043504">
    <property type="entry name" value="Peptidase_S1_PA_chymotrypsin"/>
</dbReference>
<dbReference type="InterPro" id="IPR008256">
    <property type="entry name" value="Peptidase_S1B"/>
</dbReference>
<dbReference type="InterPro" id="IPR028301">
    <property type="entry name" value="V8_his_AS"/>
</dbReference>
<dbReference type="PANTHER" id="PTHR43019:SF23">
    <property type="entry name" value="PROTEASE DO-LIKE 5, CHLOROPLASTIC"/>
    <property type="match status" value="1"/>
</dbReference>
<dbReference type="PANTHER" id="PTHR43019">
    <property type="entry name" value="SERINE ENDOPROTEASE DEGS"/>
    <property type="match status" value="1"/>
</dbReference>
<dbReference type="Pfam" id="PF13365">
    <property type="entry name" value="Trypsin_2"/>
    <property type="match status" value="1"/>
</dbReference>
<dbReference type="PRINTS" id="PR00839">
    <property type="entry name" value="V8PROTEASE"/>
</dbReference>
<dbReference type="SUPFAM" id="SSF50494">
    <property type="entry name" value="Trypsin-like serine proteases"/>
    <property type="match status" value="1"/>
</dbReference>
<dbReference type="PROSITE" id="PS00672">
    <property type="entry name" value="V8_HIS"/>
    <property type="match status" value="1"/>
</dbReference>
<feature type="signal peptide" evidence="1">
    <location>
        <begin position="1"/>
        <end position="36"/>
    </location>
</feature>
<feature type="chain" id="PRO_0000359586" description="Serine protease SplF">
    <location>
        <begin position="37"/>
        <end position="239"/>
    </location>
</feature>
<feature type="active site" description="Charge relay system" evidence="1">
    <location>
        <position position="75"/>
    </location>
</feature>
<feature type="active site" description="Charge relay system" evidence="1">
    <location>
        <position position="114"/>
    </location>
</feature>
<feature type="active site" description="Charge relay system" evidence="1">
    <location>
        <position position="192"/>
    </location>
</feature>
<name>SPLF_STAAE</name>
<organism>
    <name type="scientific">Staphylococcus aureus (strain Newman)</name>
    <dbReference type="NCBI Taxonomy" id="426430"/>
    <lineage>
        <taxon>Bacteria</taxon>
        <taxon>Bacillati</taxon>
        <taxon>Bacillota</taxon>
        <taxon>Bacilli</taxon>
        <taxon>Bacillales</taxon>
        <taxon>Staphylococcaceae</taxon>
        <taxon>Staphylococcus</taxon>
    </lineage>
</organism>
<protein>
    <recommendedName>
        <fullName>Serine protease SplF</fullName>
        <ecNumber>3.4.21.-</ecNumber>
    </recommendedName>
</protein>
<keyword id="KW-0378">Hydrolase</keyword>
<keyword id="KW-0645">Protease</keyword>
<keyword id="KW-0964">Secreted</keyword>
<keyword id="KW-0720">Serine protease</keyword>
<keyword id="KW-0732">Signal</keyword>
<proteinExistence type="inferred from homology"/>
<accession>A6QHZ1</accession>
<comment type="subcellular location">
    <subcellularLocation>
        <location evidence="1">Secreted</location>
    </subcellularLocation>
</comment>
<comment type="similarity">
    <text evidence="2">Belongs to the peptidase S1B family.</text>
</comment>
<reference key="1">
    <citation type="journal article" date="2008" name="J. Bacteriol.">
        <title>Genome sequence of Staphylococcus aureus strain Newman and comparative analysis of staphylococcal genomes: polymorphism and evolution of two major pathogenicity islands.</title>
        <authorList>
            <person name="Baba T."/>
            <person name="Bae T."/>
            <person name="Schneewind O."/>
            <person name="Takeuchi F."/>
            <person name="Hiramatsu K."/>
        </authorList>
    </citation>
    <scope>NUCLEOTIDE SEQUENCE [LARGE SCALE GENOMIC DNA]</scope>
    <source>
        <strain>Newman</strain>
    </source>
</reference>
<evidence type="ECO:0000250" key="1"/>
<evidence type="ECO:0000305" key="2"/>
<sequence length="239" mass="25655">MNKNIIIKSIAALTILTSITGVGTTMVEGIQQTAKAENTVKQITNTNVAPYSGVTWMGAGTGFVVGNHTIITNKHVTYHMKVGDEIKAHPNGFYNNGGGLYKVTKIVDYPGKEDIAVVQVEEKSTQPKGRKFKDFTSKFNIASEAKENEPISVIGYPNPNGNKLQMYESTGKVLSVNGNIVSSDAIIQPGSSGSPILNSKHEAIGVIYAGNKPSGESTRGFAVYFSPEIKKFIADNLDK</sequence>
<gene>
    <name type="primary">splF</name>
    <name type="ordered locus">NWMN_1701</name>
</gene>